<reference key="1">
    <citation type="journal article" date="1997" name="Nature">
        <title>The complete genome sequence of the gastric pathogen Helicobacter pylori.</title>
        <authorList>
            <person name="Tomb J.-F."/>
            <person name="White O."/>
            <person name="Kerlavage A.R."/>
            <person name="Clayton R.A."/>
            <person name="Sutton G.G."/>
            <person name="Fleischmann R.D."/>
            <person name="Ketchum K.A."/>
            <person name="Klenk H.-P."/>
            <person name="Gill S.R."/>
            <person name="Dougherty B.A."/>
            <person name="Nelson K.E."/>
            <person name="Quackenbush J."/>
            <person name="Zhou L."/>
            <person name="Kirkness E.F."/>
            <person name="Peterson S.N."/>
            <person name="Loftus B.J."/>
            <person name="Richardson D.L."/>
            <person name="Dodson R.J."/>
            <person name="Khalak H.G."/>
            <person name="Glodek A."/>
            <person name="McKenney K."/>
            <person name="FitzGerald L.M."/>
            <person name="Lee N."/>
            <person name="Adams M.D."/>
            <person name="Hickey E.K."/>
            <person name="Berg D.E."/>
            <person name="Gocayne J.D."/>
            <person name="Utterback T.R."/>
            <person name="Peterson J.D."/>
            <person name="Kelley J.M."/>
            <person name="Cotton M.D."/>
            <person name="Weidman J.F."/>
            <person name="Fujii C."/>
            <person name="Bowman C."/>
            <person name="Watthey L."/>
            <person name="Wallin E."/>
            <person name="Hayes W.S."/>
            <person name="Borodovsky M."/>
            <person name="Karp P.D."/>
            <person name="Smith H.O."/>
            <person name="Fraser C.M."/>
            <person name="Venter J.C."/>
        </authorList>
    </citation>
    <scope>NUCLEOTIDE SEQUENCE [LARGE SCALE GENOMIC DNA]</scope>
    <source>
        <strain>ATCC 700392 / 26695</strain>
    </source>
</reference>
<accession>P56004</accession>
<sequence length="187" mass="20788">MAIGMSELKKGLKIELGGVPYRIVEYQHVKPGKGAAFVRAKIKSFLDGKVIEKTFHAGDKCEEPNLVEKTMQYLYHDGDTYQFMDIESYEQIALNDSQVGEASKWMLDGMQVQVLLHNDKAISVDVPQVVALKIVETAPNFKGDTSSASKKPATLETGAVVQVPFHVLEGEIIKVNTETEEYLEKVK</sequence>
<organism>
    <name type="scientific">Helicobacter pylori (strain ATCC 700392 / 26695)</name>
    <name type="common">Campylobacter pylori</name>
    <dbReference type="NCBI Taxonomy" id="85962"/>
    <lineage>
        <taxon>Bacteria</taxon>
        <taxon>Pseudomonadati</taxon>
        <taxon>Campylobacterota</taxon>
        <taxon>Epsilonproteobacteria</taxon>
        <taxon>Campylobacterales</taxon>
        <taxon>Helicobacteraceae</taxon>
        <taxon>Helicobacter</taxon>
    </lineage>
</organism>
<feature type="chain" id="PRO_0000094260" description="Elongation factor P">
    <location>
        <begin position="1"/>
        <end position="187"/>
    </location>
</feature>
<evidence type="ECO:0000250" key="1"/>
<evidence type="ECO:0000305" key="2"/>
<comment type="function">
    <text evidence="1">Involved in peptide bond synthesis. Stimulates efficient translation and peptide-bond synthesis on native or reconstituted 70S ribosomes in vitro. Probably functions indirectly by altering the affinity of the ribosome for aminoacyl-tRNA, thus increasing their reactivity as acceptors for peptidyl transferase (By similarity).</text>
</comment>
<comment type="pathway">
    <text>Protein biosynthesis; polypeptide chain elongation.</text>
</comment>
<comment type="subcellular location">
    <subcellularLocation>
        <location evidence="1">Cytoplasm</location>
    </subcellularLocation>
</comment>
<comment type="similarity">
    <text evidence="2">Belongs to the elongation factor P family.</text>
</comment>
<proteinExistence type="inferred from homology"/>
<keyword id="KW-0963">Cytoplasm</keyword>
<keyword id="KW-0251">Elongation factor</keyword>
<keyword id="KW-0648">Protein biosynthesis</keyword>
<keyword id="KW-1185">Reference proteome</keyword>
<name>EFP_HELPY</name>
<gene>
    <name type="primary">efp</name>
    <name type="ordered locus">HP_0177</name>
</gene>
<dbReference type="EMBL" id="AE000511">
    <property type="protein sequence ID" value="AAD07247.1"/>
    <property type="molecule type" value="Genomic_DNA"/>
</dbReference>
<dbReference type="PIR" id="A64542">
    <property type="entry name" value="A64542"/>
</dbReference>
<dbReference type="RefSeq" id="NP_206976.1">
    <property type="nucleotide sequence ID" value="NC_000915.1"/>
</dbReference>
<dbReference type="RefSeq" id="WP_000974265.1">
    <property type="nucleotide sequence ID" value="NC_018939.1"/>
</dbReference>
<dbReference type="SMR" id="P56004"/>
<dbReference type="DIP" id="DIP-3260N"/>
<dbReference type="FunCoup" id="P56004">
    <property type="interactions" value="390"/>
</dbReference>
<dbReference type="IntAct" id="P56004">
    <property type="interactions" value="3"/>
</dbReference>
<dbReference type="MINT" id="P56004"/>
<dbReference type="STRING" id="85962.HP_0177"/>
<dbReference type="PaxDb" id="85962-C694_00880"/>
<dbReference type="EnsemblBacteria" id="AAD07247">
    <property type="protein sequence ID" value="AAD07247"/>
    <property type="gene ID" value="HP_0177"/>
</dbReference>
<dbReference type="GeneID" id="93236545"/>
<dbReference type="KEGG" id="heo:C694_00880"/>
<dbReference type="KEGG" id="hpy:HP_0177"/>
<dbReference type="PATRIC" id="fig|85962.47.peg.191"/>
<dbReference type="eggNOG" id="COG0231">
    <property type="taxonomic scope" value="Bacteria"/>
</dbReference>
<dbReference type="InParanoid" id="P56004"/>
<dbReference type="OrthoDB" id="9801844at2"/>
<dbReference type="PhylomeDB" id="P56004"/>
<dbReference type="UniPathway" id="UPA00345"/>
<dbReference type="Proteomes" id="UP000000429">
    <property type="component" value="Chromosome"/>
</dbReference>
<dbReference type="GO" id="GO:0005737">
    <property type="term" value="C:cytoplasm"/>
    <property type="evidence" value="ECO:0000318"/>
    <property type="project" value="GO_Central"/>
</dbReference>
<dbReference type="GO" id="GO:0003746">
    <property type="term" value="F:translation elongation factor activity"/>
    <property type="evidence" value="ECO:0000318"/>
    <property type="project" value="GO_Central"/>
</dbReference>
<dbReference type="GO" id="GO:0043043">
    <property type="term" value="P:peptide biosynthetic process"/>
    <property type="evidence" value="ECO:0007669"/>
    <property type="project" value="InterPro"/>
</dbReference>
<dbReference type="CDD" id="cd04470">
    <property type="entry name" value="S1_EF-P_repeat_1"/>
    <property type="match status" value="1"/>
</dbReference>
<dbReference type="CDD" id="cd05794">
    <property type="entry name" value="S1_EF-P_repeat_2"/>
    <property type="match status" value="1"/>
</dbReference>
<dbReference type="FunFam" id="2.30.30.30:FF:000003">
    <property type="entry name" value="Elongation factor P"/>
    <property type="match status" value="1"/>
</dbReference>
<dbReference type="FunFam" id="2.40.50.140:FF:000004">
    <property type="entry name" value="Elongation factor P"/>
    <property type="match status" value="1"/>
</dbReference>
<dbReference type="FunFam" id="2.40.50.140:FF:000009">
    <property type="entry name" value="Elongation factor P"/>
    <property type="match status" value="1"/>
</dbReference>
<dbReference type="Gene3D" id="2.30.30.30">
    <property type="match status" value="1"/>
</dbReference>
<dbReference type="Gene3D" id="2.40.50.140">
    <property type="entry name" value="Nucleic acid-binding proteins"/>
    <property type="match status" value="2"/>
</dbReference>
<dbReference type="HAMAP" id="MF_00141">
    <property type="entry name" value="EF_P"/>
    <property type="match status" value="1"/>
</dbReference>
<dbReference type="InterPro" id="IPR015365">
    <property type="entry name" value="Elong-fact-P_C"/>
</dbReference>
<dbReference type="InterPro" id="IPR012340">
    <property type="entry name" value="NA-bd_OB-fold"/>
</dbReference>
<dbReference type="InterPro" id="IPR014722">
    <property type="entry name" value="Rib_uL2_dom2"/>
</dbReference>
<dbReference type="InterPro" id="IPR020599">
    <property type="entry name" value="Transl_elong_fac_P/YeiP"/>
</dbReference>
<dbReference type="InterPro" id="IPR013185">
    <property type="entry name" value="Transl_elong_KOW-like"/>
</dbReference>
<dbReference type="InterPro" id="IPR001059">
    <property type="entry name" value="Transl_elong_P/YeiP_cen"/>
</dbReference>
<dbReference type="InterPro" id="IPR013852">
    <property type="entry name" value="Transl_elong_P/YeiP_CS"/>
</dbReference>
<dbReference type="InterPro" id="IPR011768">
    <property type="entry name" value="Transl_elongation_fac_P"/>
</dbReference>
<dbReference type="InterPro" id="IPR008991">
    <property type="entry name" value="Translation_prot_SH3-like_sf"/>
</dbReference>
<dbReference type="NCBIfam" id="TIGR00038">
    <property type="entry name" value="efp"/>
    <property type="match status" value="1"/>
</dbReference>
<dbReference type="NCBIfam" id="NF001810">
    <property type="entry name" value="PRK00529.1"/>
    <property type="match status" value="1"/>
</dbReference>
<dbReference type="PANTHER" id="PTHR30053">
    <property type="entry name" value="ELONGATION FACTOR P"/>
    <property type="match status" value="1"/>
</dbReference>
<dbReference type="PANTHER" id="PTHR30053:SF12">
    <property type="entry name" value="ELONGATION FACTOR P (EF-P) FAMILY PROTEIN"/>
    <property type="match status" value="1"/>
</dbReference>
<dbReference type="Pfam" id="PF01132">
    <property type="entry name" value="EFP"/>
    <property type="match status" value="1"/>
</dbReference>
<dbReference type="Pfam" id="PF08207">
    <property type="entry name" value="EFP_N"/>
    <property type="match status" value="1"/>
</dbReference>
<dbReference type="Pfam" id="PF09285">
    <property type="entry name" value="Elong-fact-P_C"/>
    <property type="match status" value="1"/>
</dbReference>
<dbReference type="PIRSF" id="PIRSF005901">
    <property type="entry name" value="EF-P"/>
    <property type="match status" value="1"/>
</dbReference>
<dbReference type="SMART" id="SM01185">
    <property type="entry name" value="EFP"/>
    <property type="match status" value="1"/>
</dbReference>
<dbReference type="SMART" id="SM00841">
    <property type="entry name" value="Elong-fact-P_C"/>
    <property type="match status" value="1"/>
</dbReference>
<dbReference type="SUPFAM" id="SSF50249">
    <property type="entry name" value="Nucleic acid-binding proteins"/>
    <property type="match status" value="2"/>
</dbReference>
<dbReference type="SUPFAM" id="SSF50104">
    <property type="entry name" value="Translation proteins SH3-like domain"/>
    <property type="match status" value="1"/>
</dbReference>
<dbReference type="PROSITE" id="PS01275">
    <property type="entry name" value="EFP"/>
    <property type="match status" value="1"/>
</dbReference>
<protein>
    <recommendedName>
        <fullName>Elongation factor P</fullName>
        <shortName>EF-P</shortName>
    </recommendedName>
</protein>